<comment type="subcellular location">
    <subcellularLocation>
        <location evidence="4">Membrane</location>
        <topology evidence="4">Multi-pass membrane protein</topology>
    </subcellularLocation>
</comment>
<comment type="similarity">
    <text evidence="4">Belongs to the major facilitator superfamily. MFSD6 family.</text>
</comment>
<feature type="chain" id="PRO_0000321942" description="Major facilitator superfamily domain-containing protein 6">
    <location>
        <begin position="1"/>
        <end position="798"/>
    </location>
</feature>
<feature type="transmembrane region" description="Helical" evidence="2">
    <location>
        <begin position="74"/>
        <end position="94"/>
    </location>
</feature>
<feature type="transmembrane region" description="Helical" evidence="2">
    <location>
        <begin position="106"/>
        <end position="126"/>
    </location>
</feature>
<feature type="transmembrane region" description="Helical" evidence="2">
    <location>
        <begin position="133"/>
        <end position="153"/>
    </location>
</feature>
<feature type="transmembrane region" description="Helical" evidence="2">
    <location>
        <begin position="295"/>
        <end position="315"/>
    </location>
</feature>
<feature type="transmembrane region" description="Helical" evidence="2">
    <location>
        <begin position="344"/>
        <end position="364"/>
    </location>
</feature>
<feature type="transmembrane region" description="Helical" evidence="2">
    <location>
        <begin position="378"/>
        <end position="398"/>
    </location>
</feature>
<feature type="transmembrane region" description="Helical" evidence="2">
    <location>
        <begin position="459"/>
        <end position="479"/>
    </location>
</feature>
<feature type="transmembrane region" description="Helical" evidence="2">
    <location>
        <begin position="488"/>
        <end position="508"/>
    </location>
</feature>
<feature type="transmembrane region" description="Helical" evidence="2">
    <location>
        <begin position="516"/>
        <end position="536"/>
    </location>
</feature>
<feature type="transmembrane region" description="Helical" evidence="2">
    <location>
        <begin position="553"/>
        <end position="573"/>
    </location>
</feature>
<feature type="transmembrane region" description="Helical" evidence="2">
    <location>
        <begin position="588"/>
        <end position="608"/>
    </location>
</feature>
<feature type="transmembrane region" description="Helical" evidence="2">
    <location>
        <begin position="614"/>
        <end position="634"/>
    </location>
</feature>
<feature type="region of interest" description="Disordered" evidence="3">
    <location>
        <begin position="25"/>
        <end position="50"/>
    </location>
</feature>
<feature type="region of interest" description="Disordered" evidence="3">
    <location>
        <begin position="671"/>
        <end position="696"/>
    </location>
</feature>
<feature type="region of interest" description="Disordered" evidence="3">
    <location>
        <begin position="732"/>
        <end position="798"/>
    </location>
</feature>
<feature type="compositionally biased region" description="Low complexity" evidence="3">
    <location>
        <begin position="38"/>
        <end position="50"/>
    </location>
</feature>
<feature type="compositionally biased region" description="Low complexity" evidence="3">
    <location>
        <begin position="760"/>
        <end position="780"/>
    </location>
</feature>
<feature type="modified residue" description="Phosphothreonine" evidence="1">
    <location>
        <position position="11"/>
    </location>
</feature>
<gene>
    <name type="primary">MFSD6</name>
    <name type="synonym">MMR2</name>
</gene>
<name>MFSD6_PIG</name>
<proteinExistence type="evidence at transcript level"/>
<dbReference type="EMBL" id="EF065517">
    <property type="protein sequence ID" value="ABK96919.1"/>
    <property type="molecule type" value="mRNA"/>
</dbReference>
<dbReference type="RefSeq" id="NP_001090926.1">
    <property type="nucleotide sequence ID" value="NM_001097457.1"/>
</dbReference>
<dbReference type="RefSeq" id="XP_005672087.1">
    <property type="nucleotide sequence ID" value="XM_005672030.2"/>
</dbReference>
<dbReference type="RefSeq" id="XP_005672088.1">
    <property type="nucleotide sequence ID" value="XM_005672031.2"/>
</dbReference>
<dbReference type="RefSeq" id="XP_020930149.1">
    <property type="nucleotide sequence ID" value="XM_021074490.1"/>
</dbReference>
<dbReference type="RefSeq" id="XP_020930150.1">
    <property type="nucleotide sequence ID" value="XM_021074491.1"/>
</dbReference>
<dbReference type="RefSeq" id="XP_020930151.1">
    <property type="nucleotide sequence ID" value="XM_021074492.1"/>
</dbReference>
<dbReference type="FunCoup" id="A1DWM3">
    <property type="interactions" value="265"/>
</dbReference>
<dbReference type="STRING" id="9823.ENSSSCP00000049499"/>
<dbReference type="PaxDb" id="9823-ENSSSCP00000017005"/>
<dbReference type="PeptideAtlas" id="A1DWM3"/>
<dbReference type="Ensembl" id="ENSSSCT00045042492.1">
    <property type="protein sequence ID" value="ENSSSCP00045029507.1"/>
    <property type="gene ID" value="ENSSSCG00045024719.1"/>
</dbReference>
<dbReference type="Ensembl" id="ENSSSCT00070017651.1">
    <property type="protein sequence ID" value="ENSSSCP00070014638.1"/>
    <property type="gene ID" value="ENSSSCG00070009097.1"/>
</dbReference>
<dbReference type="GeneID" id="100037960"/>
<dbReference type="KEGG" id="ssc:100037960"/>
<dbReference type="CTD" id="54842"/>
<dbReference type="eggNOG" id="KOG3762">
    <property type="taxonomic scope" value="Eukaryota"/>
</dbReference>
<dbReference type="HOGENOM" id="CLU_013133_2_0_1"/>
<dbReference type="InParanoid" id="A1DWM3"/>
<dbReference type="OrthoDB" id="5989317at2759"/>
<dbReference type="TreeFam" id="TF314366"/>
<dbReference type="Proteomes" id="UP000008227">
    <property type="component" value="Unplaced"/>
</dbReference>
<dbReference type="Proteomes" id="UP000314985">
    <property type="component" value="Chromosome 15"/>
</dbReference>
<dbReference type="Proteomes" id="UP000694570">
    <property type="component" value="Unplaced"/>
</dbReference>
<dbReference type="Proteomes" id="UP000694571">
    <property type="component" value="Unplaced"/>
</dbReference>
<dbReference type="Proteomes" id="UP000694720">
    <property type="component" value="Unplaced"/>
</dbReference>
<dbReference type="Proteomes" id="UP000694722">
    <property type="component" value="Unplaced"/>
</dbReference>
<dbReference type="Proteomes" id="UP000694723">
    <property type="component" value="Unplaced"/>
</dbReference>
<dbReference type="Proteomes" id="UP000694724">
    <property type="component" value="Unplaced"/>
</dbReference>
<dbReference type="Proteomes" id="UP000694725">
    <property type="component" value="Unplaced"/>
</dbReference>
<dbReference type="Proteomes" id="UP000694726">
    <property type="component" value="Unplaced"/>
</dbReference>
<dbReference type="Proteomes" id="UP000694727">
    <property type="component" value="Unplaced"/>
</dbReference>
<dbReference type="Proteomes" id="UP000694728">
    <property type="component" value="Unplaced"/>
</dbReference>
<dbReference type="GO" id="GO:0005886">
    <property type="term" value="C:plasma membrane"/>
    <property type="evidence" value="ECO:0000318"/>
    <property type="project" value="GO_Central"/>
</dbReference>
<dbReference type="GO" id="GO:0042590">
    <property type="term" value="P:antigen processing and presentation of exogenous peptide antigen via MHC class I"/>
    <property type="evidence" value="ECO:0000318"/>
    <property type="project" value="GO_Central"/>
</dbReference>
<dbReference type="CDD" id="cd17335">
    <property type="entry name" value="MFS_MFSD6"/>
    <property type="match status" value="1"/>
</dbReference>
<dbReference type="FunFam" id="1.20.1250.20:FF:000136">
    <property type="entry name" value="Major facilitator superfamily domain-containing protein 6"/>
    <property type="match status" value="1"/>
</dbReference>
<dbReference type="FunFam" id="1.20.1250.20:FF:000229">
    <property type="entry name" value="Major facilitator superfamily domain-containing protein 6"/>
    <property type="match status" value="1"/>
</dbReference>
<dbReference type="FunFam" id="1.20.1250.20:FF:000275">
    <property type="entry name" value="Major facilitator superfamily domain-containing protein 6"/>
    <property type="match status" value="1"/>
</dbReference>
<dbReference type="Gene3D" id="1.20.1250.20">
    <property type="entry name" value="MFS general substrate transporter like domains"/>
    <property type="match status" value="3"/>
</dbReference>
<dbReference type="InterPro" id="IPR024989">
    <property type="entry name" value="MFS_assoc_dom"/>
</dbReference>
<dbReference type="InterPro" id="IPR051717">
    <property type="entry name" value="MFS_MFSD6"/>
</dbReference>
<dbReference type="InterPro" id="IPR036259">
    <property type="entry name" value="MFS_trans_sf"/>
</dbReference>
<dbReference type="PANTHER" id="PTHR16172:SF2">
    <property type="entry name" value="MAJOR FACILITATOR SUPERFAMILY DOMAIN-CONTAINING PROTEIN 6"/>
    <property type="match status" value="1"/>
</dbReference>
<dbReference type="PANTHER" id="PTHR16172">
    <property type="entry name" value="MAJOR FACILITATOR SUPERFAMILY DOMAIN-CONTAINING PROTEIN 6-LIKE"/>
    <property type="match status" value="1"/>
</dbReference>
<dbReference type="Pfam" id="PF12832">
    <property type="entry name" value="MFS_1_like"/>
    <property type="match status" value="1"/>
</dbReference>
<dbReference type="SUPFAM" id="SSF103473">
    <property type="entry name" value="MFS general substrate transporter"/>
    <property type="match status" value="1"/>
</dbReference>
<evidence type="ECO:0000250" key="1">
    <source>
        <dbReference type="UniProtKB" id="Q6ZSS7"/>
    </source>
</evidence>
<evidence type="ECO:0000255" key="2"/>
<evidence type="ECO:0000256" key="3">
    <source>
        <dbReference type="SAM" id="MobiDB-lite"/>
    </source>
</evidence>
<evidence type="ECO:0000305" key="4"/>
<organism>
    <name type="scientific">Sus scrofa</name>
    <name type="common">Pig</name>
    <dbReference type="NCBI Taxonomy" id="9823"/>
    <lineage>
        <taxon>Eukaryota</taxon>
        <taxon>Metazoa</taxon>
        <taxon>Chordata</taxon>
        <taxon>Craniata</taxon>
        <taxon>Vertebrata</taxon>
        <taxon>Euteleostomi</taxon>
        <taxon>Mammalia</taxon>
        <taxon>Eutheria</taxon>
        <taxon>Laurasiatheria</taxon>
        <taxon>Artiodactyla</taxon>
        <taxon>Suina</taxon>
        <taxon>Suidae</taxon>
        <taxon>Sus</taxon>
    </lineage>
</organism>
<keyword id="KW-0472">Membrane</keyword>
<keyword id="KW-0597">Phosphoprotein</keyword>
<keyword id="KW-1185">Reference proteome</keyword>
<keyword id="KW-0812">Transmembrane</keyword>
<keyword id="KW-1133">Transmembrane helix</keyword>
<protein>
    <recommendedName>
        <fullName>Major facilitator superfamily domain-containing protein 6</fullName>
    </recommendedName>
    <alternativeName>
        <fullName>Macrophage MHC class I receptor 2 homolog</fullName>
    </alternativeName>
</protein>
<reference key="1">
    <citation type="submission" date="2006-10" db="EMBL/GenBank/DDBJ databases">
        <title>Identification of the pig ortholog of hUPP1 in PK15 cells.</title>
        <authorList>
            <person name="Bone D.B.J."/>
            <person name="Hammond J.R."/>
        </authorList>
    </citation>
    <scope>NUCLEOTIDE SEQUENCE [MRNA]</scope>
</reference>
<accession>A1DWM3</accession>
<sequence length="798" mass="88389">MATDDKVAILTDDEEEQKRKYVLADPFNGISREPEPPSNETPSPSESAAIPEEETDWIEKHCVKINNDLLISKVFYFFFYSAYGSLYPLLPVYYKQLGMSPSQSGLLVGIRYFIEFCSAPFWGVVADRFKKGKVVLLFSLLCWVLFNLGIGFVKPATLRCVPKIPPTARPTNSSHPFTILPANSSIVPSITTSTRTREKRNLPPYDGLEMLVSEPNVTETVIFSTAPNKTSAPTLQPQTDEITDRVMDLTSHPSTAPSTPPGNTTRETTTSLVTTTKSLPSDQVTLVYDQQEVEAIFLVILVVVIIGEFFSASSVTIVDTVTLQYLGKHRDRYGLQRMWGSLGWGLAMLSVGIGIDYTHIDVLIDGKGCKPPEYRNYQIVFIVFGVLMTMALIVATQFRFRYNHFKNGENKGKEVEIPQVERNSSTECSEETPTTTSHSQAFNFWDLIRLLCSVQYGSVLFVAWFMGFGYGFVFTFLYWHLEDLNGTTTLFGVCSVLSHVSELTAYFFSHKLIELIGHIRVLYIGLACNTARYIYISYLENAWTVLPMEVLQGVTHAAIWAACISYLSAAVPPELRTSAQGILQGLHLGLGRGCGAMIGGVLVNYFGAAATFRGIGMACLVILLLFALIQWLAVPDEEEDKTMLAERIPVPSSPVPIATIDLVQQQTEDVMPRIEPRLPPKKTKHQEEQEDVNKPAWGVSSSPWVTFVYALYQIKEMMQLTRDNRASEIQPLQGTSENRESPPAGGGTLPGPCETHSDPSRNQPSPQAAAASQTQSSPARPRVEESEDQQAQPAAGGH</sequence>